<comment type="function">
    <text evidence="2">A minor component of the functional amyloid in this bacterium (PubMed:23504942). Upon overexpression of the endogenous six-gene locus (fapA-fapF), cells form large clumps during liquid growth, make large amounts of biofilm and produce amyloid fibrils.</text>
</comment>
<comment type="subunit">
    <text evidence="2">A minor component of purified amyloid fibrils. Fibrils are resistant to boiling in 2% (weight/vol) SDS and require &gt;90% (vol/vol) formic acid to dissolve.</text>
</comment>
<comment type="subcellular location">
    <subcellularLocation>
        <location evidence="2">Fimbrium</location>
    </subcellularLocation>
    <subcellularLocation>
        <location evidence="2">Secreted</location>
    </subcellularLocation>
    <text evidence="2">Part of an extracellular amyloid fibril.</text>
</comment>
<comment type="disruption phenotype">
    <text evidence="2">Deletion of the entire fapA-fapF six-gene locus shows no visible growth phenotype.</text>
</comment>
<comment type="similarity">
    <text evidence="5">Belongs to the FapE family.</text>
</comment>
<name>FAPE_PSEAE</name>
<gene>
    <name evidence="4" type="primary">fapE</name>
    <name evidence="3" type="ordered locus">PA1952</name>
</gene>
<sequence>MLREHAMYTHHCFVLACCLGAALPAPASDLFAPAELSDQELSQLRGRYVLPGRIVSFGVTMSSTWQNASGQVLGARVDLQVRQNLARPVLNVTLVDRPGDAPPPVAGNGQVLGGAGLAQTQGVSQSIRTAGDHNSASNGVSIEVRHGEAPPPLSGGTPLEGALALSGETGTVKVTPNGGALQLAIQASGQGASLQSLGAGGLVQSVALSGNRNLVQNLAALEVMLKDRPGADPALNCAWEQLRALRPSGY</sequence>
<feature type="signal peptide" evidence="1">
    <location>
        <begin position="1"/>
        <end position="27"/>
    </location>
</feature>
<feature type="chain" id="PRO_5004327426" description="Functional amyloid sbunit FapE" evidence="1">
    <location>
        <begin position="28"/>
        <end position="250"/>
    </location>
</feature>
<organism>
    <name type="scientific">Pseudomonas aeruginosa (strain ATCC 15692 / DSM 22644 / CIP 104116 / JCM 14847 / LMG 12228 / 1C / PRS 101 / PAO1)</name>
    <dbReference type="NCBI Taxonomy" id="208964"/>
    <lineage>
        <taxon>Bacteria</taxon>
        <taxon>Pseudomonadati</taxon>
        <taxon>Pseudomonadota</taxon>
        <taxon>Gammaproteobacteria</taxon>
        <taxon>Pseudomonadales</taxon>
        <taxon>Pseudomonadaceae</taxon>
        <taxon>Pseudomonas</taxon>
    </lineage>
</organism>
<evidence type="ECO:0000255" key="1">
    <source>
        <dbReference type="PROSITE-ProRule" id="PRU00303"/>
    </source>
</evidence>
<evidence type="ECO:0000269" key="2">
    <source>
    </source>
</evidence>
<evidence type="ECO:0000303" key="3">
    <source>
    </source>
</evidence>
<evidence type="ECO:0000303" key="4">
    <source>
    </source>
</evidence>
<evidence type="ECO:0000305" key="5"/>
<evidence type="ECO:0000312" key="6">
    <source>
        <dbReference type="EMBL" id="AAG05340.1"/>
    </source>
</evidence>
<reference evidence="6" key="1">
    <citation type="journal article" date="2000" name="Nature">
        <title>Complete genome sequence of Pseudomonas aeruginosa PAO1, an opportunistic pathogen.</title>
        <authorList>
            <person name="Stover C.K."/>
            <person name="Pham X.-Q.T."/>
            <person name="Erwin A.L."/>
            <person name="Mizoguchi S.D."/>
            <person name="Warrener P."/>
            <person name="Hickey M.J."/>
            <person name="Brinkman F.S.L."/>
            <person name="Hufnagle W.O."/>
            <person name="Kowalik D.J."/>
            <person name="Lagrou M."/>
            <person name="Garber R.L."/>
            <person name="Goltry L."/>
            <person name="Tolentino E."/>
            <person name="Westbrock-Wadman S."/>
            <person name="Yuan Y."/>
            <person name="Brody L.L."/>
            <person name="Coulter S.N."/>
            <person name="Folger K.R."/>
            <person name="Kas A."/>
            <person name="Larbig K."/>
            <person name="Lim R.M."/>
            <person name="Smith K.A."/>
            <person name="Spencer D.H."/>
            <person name="Wong G.K.-S."/>
            <person name="Wu Z."/>
            <person name="Paulsen I.T."/>
            <person name="Reizer J."/>
            <person name="Saier M.H. Jr."/>
            <person name="Hancock R.E.W."/>
            <person name="Lory S."/>
            <person name="Olson M.V."/>
        </authorList>
    </citation>
    <scope>NUCLEOTIDE SEQUENCE [LARGE SCALE GENOMIC DNA]</scope>
    <source>
        <strain>ATCC 15692 / DSM 22644 / CIP 104116 / JCM 14847 / LMG 12228 / 1C / PRS 101 / PAO1</strain>
    </source>
</reference>
<reference key="2">
    <citation type="journal article" date="2013" name="MicrobiologyOpen">
        <title>Expression of Fap amyloids in Pseudomonas aeruginosa, P. fluorescens, and P. putida results in aggregation and increased biofilm formation.</title>
        <authorList>
            <person name="Dueholm M.S."/>
            <person name="Soendergaard M.T."/>
            <person name="Nilsson M."/>
            <person name="Christiansen G."/>
            <person name="Stensballe A."/>
            <person name="Overgaard M.T."/>
            <person name="Givskov M."/>
            <person name="Tolker-Nielsen T."/>
            <person name="Otzen D.E."/>
            <person name="Nielsen P.H."/>
        </authorList>
    </citation>
    <scope>FUNCTION</scope>
    <scope>SUBUNIT</scope>
    <scope>SUBCELLULAR LOCATION</scope>
    <scope>DISRUPTION PHENOTYPE</scope>
    <source>
        <strain>ATCC 15692 / DSM 22644 / CIP 104116 / JCM 14847 / LMG 12228 / 1C / PRS 101 / PAO1</strain>
    </source>
</reference>
<dbReference type="EMBL" id="AE004091">
    <property type="protein sequence ID" value="AAG05340.1"/>
    <property type="molecule type" value="Genomic_DNA"/>
</dbReference>
<dbReference type="PIR" id="G83400">
    <property type="entry name" value="G83400"/>
</dbReference>
<dbReference type="RefSeq" id="NP_250642.1">
    <property type="nucleotide sequence ID" value="NC_002516.2"/>
</dbReference>
<dbReference type="RefSeq" id="WP_010895591.1">
    <property type="nucleotide sequence ID" value="NZ_QZGE01000030.1"/>
</dbReference>
<dbReference type="STRING" id="208964.PA1952"/>
<dbReference type="PaxDb" id="208964-PA1952"/>
<dbReference type="GeneID" id="880731"/>
<dbReference type="KEGG" id="pae:PA1952"/>
<dbReference type="PATRIC" id="fig|208964.12.peg.2034"/>
<dbReference type="PseudoCAP" id="PA1952"/>
<dbReference type="HOGENOM" id="CLU_096100_0_0_6"/>
<dbReference type="InParanoid" id="Q9I2F2"/>
<dbReference type="OrthoDB" id="5585636at2"/>
<dbReference type="BioCyc" id="PAER208964:G1FZ6-1990-MONOMER"/>
<dbReference type="Proteomes" id="UP000002438">
    <property type="component" value="Chromosome"/>
</dbReference>
<dbReference type="GO" id="GO:0005576">
    <property type="term" value="C:extracellular region"/>
    <property type="evidence" value="ECO:0007669"/>
    <property type="project" value="UniProtKB-SubCell"/>
</dbReference>
<dbReference type="GO" id="GO:0009289">
    <property type="term" value="C:pilus"/>
    <property type="evidence" value="ECO:0007669"/>
    <property type="project" value="UniProtKB-SubCell"/>
</dbReference>
<dbReference type="GO" id="GO:1990000">
    <property type="term" value="P:amyloid fibril formation"/>
    <property type="evidence" value="ECO:0000315"/>
    <property type="project" value="PseudoCAP"/>
</dbReference>
<dbReference type="GO" id="GO:0007155">
    <property type="term" value="P:cell adhesion"/>
    <property type="evidence" value="ECO:0007669"/>
    <property type="project" value="UniProtKB-KW"/>
</dbReference>
<keyword id="KW-0034">Amyloid</keyword>
<keyword id="KW-0130">Cell adhesion</keyword>
<keyword id="KW-0281">Fimbrium</keyword>
<keyword id="KW-1185">Reference proteome</keyword>
<keyword id="KW-0964">Secreted</keyword>
<keyword id="KW-0732">Signal</keyword>
<protein>
    <recommendedName>
        <fullName evidence="5">Functional amyloid sbunit FapE</fullName>
    </recommendedName>
    <alternativeName>
        <fullName evidence="5">Fibril amyloid subunit FapE</fullName>
    </alternativeName>
</protein>
<proteinExistence type="evidence at protein level"/>
<accession>Q9I2F2</accession>